<organism>
    <name type="scientific">Bacillus anthracis (strain CDC 684 / NRRL 3495)</name>
    <dbReference type="NCBI Taxonomy" id="568206"/>
    <lineage>
        <taxon>Bacteria</taxon>
        <taxon>Bacillati</taxon>
        <taxon>Bacillota</taxon>
        <taxon>Bacilli</taxon>
        <taxon>Bacillales</taxon>
        <taxon>Bacillaceae</taxon>
        <taxon>Bacillus</taxon>
        <taxon>Bacillus cereus group</taxon>
    </lineage>
</organism>
<name>SP2AB_BACAC</name>
<gene>
    <name evidence="1" type="primary">spoIIAB</name>
    <name type="ordered locus">BAMEG_4335</name>
</gene>
<comment type="function">
    <text evidence="1">Binds to sigma F and blocks its ability to form an RNA polymerase holoenzyme (E-sigma F). Phosphorylates SpoIIAA on a serine residue. This phosphorylation may enable SpoIIAA to act as an anti-anti-sigma factor that counteracts SpoIIAB and thus releases sigma F from inhibition.</text>
</comment>
<comment type="catalytic activity">
    <reaction evidence="1">
        <text>L-seryl-[protein] + ATP = O-phospho-L-seryl-[protein] + ADP + H(+)</text>
        <dbReference type="Rhea" id="RHEA:17989"/>
        <dbReference type="Rhea" id="RHEA-COMP:9863"/>
        <dbReference type="Rhea" id="RHEA-COMP:11604"/>
        <dbReference type="ChEBI" id="CHEBI:15378"/>
        <dbReference type="ChEBI" id="CHEBI:29999"/>
        <dbReference type="ChEBI" id="CHEBI:30616"/>
        <dbReference type="ChEBI" id="CHEBI:83421"/>
        <dbReference type="ChEBI" id="CHEBI:456216"/>
        <dbReference type="EC" id="2.7.11.1"/>
    </reaction>
</comment>
<comment type="catalytic activity">
    <reaction evidence="1">
        <text>L-threonyl-[protein] + ATP = O-phospho-L-threonyl-[protein] + ADP + H(+)</text>
        <dbReference type="Rhea" id="RHEA:46608"/>
        <dbReference type="Rhea" id="RHEA-COMP:11060"/>
        <dbReference type="Rhea" id="RHEA-COMP:11605"/>
        <dbReference type="ChEBI" id="CHEBI:15378"/>
        <dbReference type="ChEBI" id="CHEBI:30013"/>
        <dbReference type="ChEBI" id="CHEBI:30616"/>
        <dbReference type="ChEBI" id="CHEBI:61977"/>
        <dbReference type="ChEBI" id="CHEBI:456216"/>
        <dbReference type="EC" id="2.7.11.1"/>
    </reaction>
</comment>
<comment type="similarity">
    <text evidence="1">Belongs to the anti-sigma-factor family.</text>
</comment>
<sequence>MRNEMNLQFSALSQNESFARVTVAAFIAQLDPTMEELTEIKTVVSEAVTNAIIHGYEGNAEGVVYISVILEEAMVKLTIRDEGIGIFNLDEARQPLFTTKPELERSGMGFTIMENFMDEVEVISNESFGTTIHLTKYLSNSNALCN</sequence>
<accession>C3LIU0</accession>
<proteinExistence type="inferred from homology"/>
<evidence type="ECO:0000255" key="1">
    <source>
        <dbReference type="HAMAP-Rule" id="MF_00637"/>
    </source>
</evidence>
<reference key="1">
    <citation type="submission" date="2008-10" db="EMBL/GenBank/DDBJ databases">
        <title>Genome sequence of Bacillus anthracis str. CDC 684.</title>
        <authorList>
            <person name="Dodson R.J."/>
            <person name="Munk A.C."/>
            <person name="Brettin T."/>
            <person name="Bruce D."/>
            <person name="Detter C."/>
            <person name="Tapia R."/>
            <person name="Han C."/>
            <person name="Sutton G."/>
            <person name="Sims D."/>
        </authorList>
    </citation>
    <scope>NUCLEOTIDE SEQUENCE [LARGE SCALE GENOMIC DNA]</scope>
    <source>
        <strain>CDC 684 / NRRL 3495</strain>
    </source>
</reference>
<dbReference type="EC" id="2.7.11.1" evidence="1"/>
<dbReference type="EMBL" id="CP001215">
    <property type="protein sequence ID" value="ACP16431.1"/>
    <property type="molecule type" value="Genomic_DNA"/>
</dbReference>
<dbReference type="RefSeq" id="WP_001243400.1">
    <property type="nucleotide sequence ID" value="NC_012581.1"/>
</dbReference>
<dbReference type="SMR" id="C3LIU0"/>
<dbReference type="GeneID" id="92883500"/>
<dbReference type="KEGG" id="bah:BAMEG_4335"/>
<dbReference type="HOGENOM" id="CLU_090336_11_0_9"/>
<dbReference type="GO" id="GO:0005524">
    <property type="term" value="F:ATP binding"/>
    <property type="evidence" value="ECO:0007669"/>
    <property type="project" value="UniProtKB-KW"/>
</dbReference>
<dbReference type="GO" id="GO:0106310">
    <property type="term" value="F:protein serine kinase activity"/>
    <property type="evidence" value="ECO:0007669"/>
    <property type="project" value="RHEA"/>
</dbReference>
<dbReference type="GO" id="GO:0004674">
    <property type="term" value="F:protein serine/threonine kinase activity"/>
    <property type="evidence" value="ECO:0007669"/>
    <property type="project" value="UniProtKB-KW"/>
</dbReference>
<dbReference type="GO" id="GO:0016989">
    <property type="term" value="F:sigma factor antagonist activity"/>
    <property type="evidence" value="ECO:0007669"/>
    <property type="project" value="InterPro"/>
</dbReference>
<dbReference type="GO" id="GO:0030436">
    <property type="term" value="P:asexual sporulation"/>
    <property type="evidence" value="ECO:0007669"/>
    <property type="project" value="UniProtKB-UniRule"/>
</dbReference>
<dbReference type="GO" id="GO:0042174">
    <property type="term" value="P:negative regulation of sporulation resulting in formation of a cellular spore"/>
    <property type="evidence" value="ECO:0007669"/>
    <property type="project" value="InterPro"/>
</dbReference>
<dbReference type="GO" id="GO:0030435">
    <property type="term" value="P:sporulation resulting in formation of a cellular spore"/>
    <property type="evidence" value="ECO:0007669"/>
    <property type="project" value="UniProtKB-KW"/>
</dbReference>
<dbReference type="FunFam" id="3.30.565.10:FF:000022">
    <property type="entry name" value="Anti-sigma F factor"/>
    <property type="match status" value="1"/>
</dbReference>
<dbReference type="Gene3D" id="3.30.565.10">
    <property type="entry name" value="Histidine kinase-like ATPase, C-terminal domain"/>
    <property type="match status" value="1"/>
</dbReference>
<dbReference type="HAMAP" id="MF_00637">
    <property type="entry name" value="Anti_sigma_F"/>
    <property type="match status" value="1"/>
</dbReference>
<dbReference type="InterPro" id="IPR050267">
    <property type="entry name" value="Anti-sigma-factor_SerPK"/>
</dbReference>
<dbReference type="InterPro" id="IPR010194">
    <property type="entry name" value="Anti-sigma_F"/>
</dbReference>
<dbReference type="InterPro" id="IPR036890">
    <property type="entry name" value="HATPase_C_sf"/>
</dbReference>
<dbReference type="NCBIfam" id="TIGR01925">
    <property type="entry name" value="spIIAB"/>
    <property type="match status" value="1"/>
</dbReference>
<dbReference type="PANTHER" id="PTHR35526:SF3">
    <property type="entry name" value="ANTI-SIGMA-F FACTOR RSBW"/>
    <property type="match status" value="1"/>
</dbReference>
<dbReference type="PANTHER" id="PTHR35526">
    <property type="entry name" value="ANTI-SIGMA-F FACTOR RSBW-RELATED"/>
    <property type="match status" value="1"/>
</dbReference>
<dbReference type="Pfam" id="PF13581">
    <property type="entry name" value="HATPase_c_2"/>
    <property type="match status" value="1"/>
</dbReference>
<dbReference type="SMART" id="SM00387">
    <property type="entry name" value="HATPase_c"/>
    <property type="match status" value="1"/>
</dbReference>
<dbReference type="SUPFAM" id="SSF55874">
    <property type="entry name" value="ATPase domain of HSP90 chaperone/DNA topoisomerase II/histidine kinase"/>
    <property type="match status" value="1"/>
</dbReference>
<feature type="chain" id="PRO_1000147380" description="Anti-sigma F factor">
    <location>
        <begin position="1"/>
        <end position="146"/>
    </location>
</feature>
<protein>
    <recommendedName>
        <fullName evidence="1">Anti-sigma F factor</fullName>
        <ecNumber evidence="1">2.7.11.1</ecNumber>
    </recommendedName>
    <alternativeName>
        <fullName evidence="1">Stage II sporulation protein AB</fullName>
    </alternativeName>
</protein>
<keyword id="KW-0067">ATP-binding</keyword>
<keyword id="KW-0418">Kinase</keyword>
<keyword id="KW-0547">Nucleotide-binding</keyword>
<keyword id="KW-0723">Serine/threonine-protein kinase</keyword>
<keyword id="KW-0749">Sporulation</keyword>
<keyword id="KW-0808">Transferase</keyword>